<keyword id="KW-0900">Congenital disorder of glycosylation</keyword>
<keyword id="KW-0225">Disease variant</keyword>
<keyword id="KW-0256">Endoplasmic reticulum</keyword>
<keyword id="KW-0418">Kinase</keyword>
<keyword id="KW-0443">Lipid metabolism</keyword>
<keyword id="KW-0472">Membrane</keyword>
<keyword id="KW-1267">Proteomics identification</keyword>
<keyword id="KW-1185">Reference proteome</keyword>
<keyword id="KW-0808">Transferase</keyword>
<keyword id="KW-0812">Transmembrane</keyword>
<keyword id="KW-1133">Transmembrane helix</keyword>
<comment type="function">
    <text evidence="3 4 5 6">Catalyzes CTP-mediated phosphorylation of dolichol, the terminal step in de novo dolichyl monophosphate (Dol-P) biosynthesis (PubMed:12213788, PubMed:16923818, PubMed:17273964, PubMed:22242004). Dol-P is a lipid carrier essential for the synthesis of N-linked and O-linked oligosaccharides and for GPI anchors (PubMed:12213788).</text>
</comment>
<comment type="catalytic activity">
    <reaction evidence="3 4 5 6">
        <text>a di-trans,poly-cis-dolichol + CTP = a di-trans,poly-cis-dolichyl phosphate + CDP + H(+)</text>
        <dbReference type="Rhea" id="RHEA:13133"/>
        <dbReference type="Rhea" id="RHEA-COMP:19495"/>
        <dbReference type="Rhea" id="RHEA-COMP:19498"/>
        <dbReference type="ChEBI" id="CHEBI:15378"/>
        <dbReference type="ChEBI" id="CHEBI:16091"/>
        <dbReference type="ChEBI" id="CHEBI:37563"/>
        <dbReference type="ChEBI" id="CHEBI:57683"/>
        <dbReference type="ChEBI" id="CHEBI:58069"/>
        <dbReference type="EC" id="2.7.1.108"/>
    </reaction>
    <physiologicalReaction direction="left-to-right" evidence="13 14">
        <dbReference type="Rhea" id="RHEA:13134"/>
    </physiologicalReaction>
</comment>
<comment type="biophysicochemical properties">
    <kinetics>
        <KM evidence="4">22.8 uM for dolichol</KM>
        <KM evidence="4">3.5 uM for CTP</KM>
    </kinetics>
</comment>
<comment type="pathway">
    <text evidence="3">Protein modification; protein glycosylation.</text>
</comment>
<comment type="interaction">
    <interactant intactId="EBI-8645574">
        <id>Q9UPQ8</id>
    </interactant>
    <interactant intactId="EBI-743771">
        <id>Q92624</id>
        <label>APPBP2</label>
    </interactant>
    <organismsDiffer>false</organismsDiffer>
    <experiments>3</experiments>
</comment>
<comment type="interaction">
    <interactant intactId="EBI-8645574">
        <id>Q9UPQ8</id>
    </interactant>
    <interactant intactId="EBI-7797864">
        <id>P11912</id>
        <label>CD79A</label>
    </interactant>
    <organismsDiffer>false</organismsDiffer>
    <experiments>3</experiments>
</comment>
<comment type="interaction">
    <interactant intactId="EBI-8645574">
        <id>Q9UPQ8</id>
    </interactant>
    <interactant intactId="EBI-17447707">
        <id>Q9H9P2</id>
        <label>CHODL</label>
    </interactant>
    <organismsDiffer>false</organismsDiffer>
    <experiments>3</experiments>
</comment>
<comment type="interaction">
    <interactant intactId="EBI-8645574">
        <id>Q9UPQ8</id>
    </interactant>
    <interactant intactId="EBI-6942903">
        <id>Q96BA8</id>
        <label>CREB3L1</label>
    </interactant>
    <organismsDiffer>false</organismsDiffer>
    <experiments>3</experiments>
</comment>
<comment type="interaction">
    <interactant intactId="EBI-8645574">
        <id>Q9UPQ8</id>
    </interactant>
    <interactant intactId="EBI-529425">
        <id>Q92838</id>
        <label>EDA</label>
    </interactant>
    <organismsDiffer>false</organismsDiffer>
    <experiments>6</experiments>
</comment>
<comment type="interaction">
    <interactant intactId="EBI-8645574">
        <id>Q9UPQ8</id>
    </interactant>
    <interactant intactId="EBI-18304435">
        <id>Q5JX71</id>
        <label>FAM209A</label>
    </interactant>
    <organismsDiffer>false</organismsDiffer>
    <experiments>3</experiments>
</comment>
<comment type="interaction">
    <interactant intactId="EBI-8645574">
        <id>Q9UPQ8</id>
    </interactant>
    <interactant intactId="EBI-12142257">
        <id>Q8TBE3</id>
        <label>FNDC9</label>
    </interactant>
    <organismsDiffer>false</organismsDiffer>
    <experiments>3</experiments>
</comment>
<comment type="interaction">
    <interactant intactId="EBI-8645574">
        <id>Q9UPQ8</id>
    </interactant>
    <interactant intactId="EBI-17458373">
        <id>P48165</id>
        <label>GJA8</label>
    </interactant>
    <organismsDiffer>false</organismsDiffer>
    <experiments>3</experiments>
</comment>
<comment type="interaction">
    <interactant intactId="EBI-8645574">
        <id>Q9UPQ8</id>
    </interactant>
    <interactant intactId="EBI-11721746">
        <id>Q8TED1</id>
        <label>GPX8</label>
    </interactant>
    <organismsDiffer>false</organismsDiffer>
    <experiments>3</experiments>
</comment>
<comment type="interaction">
    <interactant intactId="EBI-8645574">
        <id>Q9UPQ8</id>
    </interactant>
    <interactant intactId="EBI-8286599">
        <id>Q09470</id>
        <label>KCNA1</label>
    </interactant>
    <organismsDiffer>false</organismsDiffer>
    <experiments>7</experiments>
</comment>
<comment type="interaction">
    <interactant intactId="EBI-8645574">
        <id>Q9UPQ8</id>
    </interactant>
    <interactant intactId="EBI-12265328">
        <id>Q16322</id>
        <label>KCNA10</label>
    </interactant>
    <organismsDiffer>false</organismsDiffer>
    <experiments>5</experiments>
</comment>
<comment type="interaction">
    <interactant intactId="EBI-8645574">
        <id>Q9UPQ8</id>
    </interactant>
    <interactant intactId="EBI-8627664">
        <id>P22001</id>
        <label>KCNA3</label>
    </interactant>
    <organismsDiffer>false</organismsDiffer>
    <experiments>6</experiments>
</comment>
<comment type="interaction">
    <interactant intactId="EBI-8645574">
        <id>Q9UPQ8</id>
    </interactant>
    <interactant intactId="EBI-6426142">
        <id>P17658</id>
        <label>KCNA6</label>
    </interactant>
    <organismsDiffer>false</organismsDiffer>
    <experiments>6</experiments>
</comment>
<comment type="interaction">
    <interactant intactId="EBI-8645574">
        <id>Q9UPQ8</id>
    </interactant>
    <interactant intactId="EBI-3925442">
        <id>Q9HCJ2</id>
        <label>LRRC4C</label>
    </interactant>
    <organismsDiffer>false</organismsDiffer>
    <experiments>5</experiments>
</comment>
<comment type="interaction">
    <interactant intactId="EBI-8645574">
        <id>Q9UPQ8</id>
    </interactant>
    <interactant intactId="EBI-2880595">
        <id>Q92536</id>
        <label>SLC7A6</label>
    </interactant>
    <organismsDiffer>false</organismsDiffer>
    <experiments>3</experiments>
</comment>
<comment type="interaction">
    <interactant intactId="EBI-8645574">
        <id>Q9UPQ8</id>
    </interactant>
    <interactant intactId="EBI-10273251">
        <id>Q8TBG9</id>
        <label>SYNPR</label>
    </interactant>
    <organismsDiffer>false</organismsDiffer>
    <experiments>3</experiments>
</comment>
<comment type="interaction">
    <interactant intactId="EBI-8645574">
        <id>Q9UPQ8</id>
    </interactant>
    <interactant intactId="EBI-3923061">
        <id>Q96B21</id>
        <label>TMEM45B</label>
    </interactant>
    <organismsDiffer>false</organismsDiffer>
    <experiments>3</experiments>
</comment>
<comment type="interaction">
    <interactant intactId="EBI-8645574">
        <id>Q9UPQ8</id>
    </interactant>
    <interactant intactId="EBI-11742770">
        <id>Q96HE8</id>
        <label>TMEM80</label>
    </interactant>
    <organismsDiffer>false</organismsDiffer>
    <experiments>3</experiments>
</comment>
<comment type="interaction">
    <interactant intactId="EBI-8645574">
        <id>Q9UPQ8</id>
    </interactant>
    <interactant intactId="EBI-744988">
        <id>Q9H7M9</id>
        <label>VSIR</label>
    </interactant>
    <organismsDiffer>false</organismsDiffer>
    <experiments>3</experiments>
</comment>
<comment type="subcellular location">
    <subcellularLocation>
        <location evidence="4">Endoplasmic reticulum membrane</location>
        <topology evidence="12">Multi-pass membrane protein</topology>
    </subcellularLocation>
</comment>
<comment type="tissue specificity">
    <text evidence="2">Ubiquitous.</text>
</comment>
<comment type="disease" evidence="5 6 7 8">
    <disease id="DI-00345">
        <name>Congenital disorder of glycosylation 1M</name>
        <acronym>CDG1M</acronym>
        <description>A form of congenital disorder of glycosylation, a multisystem disorder caused by a defect in glycoprotein biosynthesis and characterized by under-glycosylated serum glycoproteins. Congenital disorders of glycosylation result in a wide variety of clinical features, such as defects in the nervous system development, psychomotor retardation, dysmorphic features, hypotonia, coagulation disorders, and immunodeficiency. The broad spectrum of features reflects the critical role of N-glycoproteins during embryonic development, differentiation, and maintenance of cell functions. CDG1M is a very severe disease with death occurring in early life.</description>
        <dbReference type="MIM" id="610768"/>
    </disease>
    <text>The disease is caused by variants affecting the gene represented in this entry.</text>
</comment>
<comment type="miscellaneous">
    <text evidence="3">Complements the defects in growth, dolichol kinase activity and protein N-glycosylation at the restrictive temperature in yeast sec59 mutant cells.</text>
</comment>
<comment type="similarity">
    <text evidence="12">Belongs to the polyprenol kinase family.</text>
</comment>
<comment type="sequence caution" evidence="12">
    <conflict type="erroneous initiation">
        <sequence resource="EMBL-CDS" id="BAA83046"/>
    </conflict>
</comment>
<sequence>MTRECPSPAPGPGAPLSGSVLAEAAVVFAVVLSIHATVWDRYSWCAVALAVQAFYVQYKWDRLLQQGSAVFQFRMSANSGLLPASMVMPLLGLVMKERCQTAGNPFFERFGIVVAATGMAVALFSSVLALGITRPVPTNTCVILGLAGGVIIYIMKHSLSVGEVIEVLEVLLIFVYLNMILLYLLPRCFTPGEALLVLGGISFVLNQLIKRSLTLVESQGDPVDFFLLVVVVGMVLMGIFFSTLFVFMDSGTWASSIFFHLMTCVLSLGVVLPWLHRLIRRNPLLWLLQFLFQTDTRIYLLAYWSLLATLACLVVLYQNAKRSSSESKKHQAPTIARKYFHLIVVATYIPGIIFDRPLLYVAATVCLAVFIFLEYVRYFRIKPLGHTLRSFLSLFLDERDSGPLILTHIYLLLGMSLPIWLIPRPCTQKGSLGGARALVPYAGVLAVGVGDTVASIFGSTMGEIRWPGTKKTFEGTMTSIFAQIISVALILIFDSGVDLNYSYAWILGSISTVSLLEAYTTQIDNLLLPLYLLILLMA</sequence>
<proteinExistence type="evidence at protein level"/>
<organism>
    <name type="scientific">Homo sapiens</name>
    <name type="common">Human</name>
    <dbReference type="NCBI Taxonomy" id="9606"/>
    <lineage>
        <taxon>Eukaryota</taxon>
        <taxon>Metazoa</taxon>
        <taxon>Chordata</taxon>
        <taxon>Craniata</taxon>
        <taxon>Vertebrata</taxon>
        <taxon>Euteleostomi</taxon>
        <taxon>Mammalia</taxon>
        <taxon>Eutheria</taxon>
        <taxon>Euarchontoglires</taxon>
        <taxon>Primates</taxon>
        <taxon>Haplorrhini</taxon>
        <taxon>Catarrhini</taxon>
        <taxon>Hominidae</taxon>
        <taxon>Homo</taxon>
    </lineage>
</organism>
<accession>Q9UPQ8</accession>
<accession>Q5SRE6</accession>
<name>DOLK_HUMAN</name>
<reference key="1">
    <citation type="journal article" date="2002" name="Glycobiology">
        <title>Expression and characterization of a human cDNA that complements the temperature-sensitive defect in dolichol kinase activity in the yeast sec59-1 mutant: the enzymatic phosphorylation of dolichol and diacylglycerol are catalyzed by separate CTP-mediated kinase activities in Saccharomyces cerevisiae.</title>
        <authorList>
            <person name="Fernandez F."/>
            <person name="Shridas P."/>
            <person name="Jiang S."/>
            <person name="Aebi M."/>
            <person name="Waechter C.J."/>
        </authorList>
    </citation>
    <scope>NUCLEOTIDE SEQUENCE [MRNA]</scope>
    <scope>CATALYTIC ACTIVITY</scope>
    <scope>FUNCTION</scope>
    <source>
        <tissue>Brain</tissue>
    </source>
</reference>
<reference key="2">
    <citation type="journal article" date="1999" name="DNA Res.">
        <title>Prediction of the coding sequences of unidentified human genes. XIV. The complete sequences of 100 new cDNA clones from brain which code for large proteins in vitro.</title>
        <authorList>
            <person name="Kikuno R."/>
            <person name="Nagase T."/>
            <person name="Ishikawa K."/>
            <person name="Hirosawa M."/>
            <person name="Miyajima N."/>
            <person name="Tanaka A."/>
            <person name="Kotani H."/>
            <person name="Nomura N."/>
            <person name="Ohara O."/>
        </authorList>
    </citation>
    <scope>NUCLEOTIDE SEQUENCE [LARGE SCALE MRNA]</scope>
    <scope>TISSUE SPECIFICITY</scope>
    <source>
        <tissue>Brain</tissue>
    </source>
</reference>
<reference key="3">
    <citation type="journal article" date="2003" name="Genome Res.">
        <title>The secreted protein discovery initiative (SPDI), a large-scale effort to identify novel human secreted and transmembrane proteins: a bioinformatics assessment.</title>
        <authorList>
            <person name="Clark H.F."/>
            <person name="Gurney A.L."/>
            <person name="Abaya E."/>
            <person name="Baker K."/>
            <person name="Baldwin D.T."/>
            <person name="Brush J."/>
            <person name="Chen J."/>
            <person name="Chow B."/>
            <person name="Chui C."/>
            <person name="Crowley C."/>
            <person name="Currell B."/>
            <person name="Deuel B."/>
            <person name="Dowd P."/>
            <person name="Eaton D."/>
            <person name="Foster J.S."/>
            <person name="Grimaldi C."/>
            <person name="Gu Q."/>
            <person name="Hass P.E."/>
            <person name="Heldens S."/>
            <person name="Huang A."/>
            <person name="Kim H.S."/>
            <person name="Klimowski L."/>
            <person name="Jin Y."/>
            <person name="Johnson S."/>
            <person name="Lee J."/>
            <person name="Lewis L."/>
            <person name="Liao D."/>
            <person name="Mark M.R."/>
            <person name="Robbie E."/>
            <person name="Sanchez C."/>
            <person name="Schoenfeld J."/>
            <person name="Seshagiri S."/>
            <person name="Simmons L."/>
            <person name="Singh J."/>
            <person name="Smith V."/>
            <person name="Stinson J."/>
            <person name="Vagts A."/>
            <person name="Vandlen R.L."/>
            <person name="Watanabe C."/>
            <person name="Wieand D."/>
            <person name="Woods K."/>
            <person name="Xie M.-H."/>
            <person name="Yansura D.G."/>
            <person name="Yi S."/>
            <person name="Yu G."/>
            <person name="Yuan J."/>
            <person name="Zhang M."/>
            <person name="Zhang Z."/>
            <person name="Goddard A.D."/>
            <person name="Wood W.I."/>
            <person name="Godowski P.J."/>
            <person name="Gray A.M."/>
        </authorList>
    </citation>
    <scope>NUCLEOTIDE SEQUENCE [LARGE SCALE MRNA]</scope>
</reference>
<reference key="4">
    <citation type="journal article" date="2004" name="Nature">
        <title>DNA sequence and analysis of human chromosome 9.</title>
        <authorList>
            <person name="Humphray S.J."/>
            <person name="Oliver K."/>
            <person name="Hunt A.R."/>
            <person name="Plumb R.W."/>
            <person name="Loveland J.E."/>
            <person name="Howe K.L."/>
            <person name="Andrews T.D."/>
            <person name="Searle S."/>
            <person name="Hunt S.E."/>
            <person name="Scott C.E."/>
            <person name="Jones M.C."/>
            <person name="Ainscough R."/>
            <person name="Almeida J.P."/>
            <person name="Ambrose K.D."/>
            <person name="Ashwell R.I.S."/>
            <person name="Babbage A.K."/>
            <person name="Babbage S."/>
            <person name="Bagguley C.L."/>
            <person name="Bailey J."/>
            <person name="Banerjee R."/>
            <person name="Barker D.J."/>
            <person name="Barlow K.F."/>
            <person name="Bates K."/>
            <person name="Beasley H."/>
            <person name="Beasley O."/>
            <person name="Bird C.P."/>
            <person name="Bray-Allen S."/>
            <person name="Brown A.J."/>
            <person name="Brown J.Y."/>
            <person name="Burford D."/>
            <person name="Burrill W."/>
            <person name="Burton J."/>
            <person name="Carder C."/>
            <person name="Carter N.P."/>
            <person name="Chapman J.C."/>
            <person name="Chen Y."/>
            <person name="Clarke G."/>
            <person name="Clark S.Y."/>
            <person name="Clee C.M."/>
            <person name="Clegg S."/>
            <person name="Collier R.E."/>
            <person name="Corby N."/>
            <person name="Crosier M."/>
            <person name="Cummings A.T."/>
            <person name="Davies J."/>
            <person name="Dhami P."/>
            <person name="Dunn M."/>
            <person name="Dutta I."/>
            <person name="Dyer L.W."/>
            <person name="Earthrowl M.E."/>
            <person name="Faulkner L."/>
            <person name="Fleming C.J."/>
            <person name="Frankish A."/>
            <person name="Frankland J.A."/>
            <person name="French L."/>
            <person name="Fricker D.G."/>
            <person name="Garner P."/>
            <person name="Garnett J."/>
            <person name="Ghori J."/>
            <person name="Gilbert J.G.R."/>
            <person name="Glison C."/>
            <person name="Grafham D.V."/>
            <person name="Gribble S."/>
            <person name="Griffiths C."/>
            <person name="Griffiths-Jones S."/>
            <person name="Grocock R."/>
            <person name="Guy J."/>
            <person name="Hall R.E."/>
            <person name="Hammond S."/>
            <person name="Harley J.L."/>
            <person name="Harrison E.S.I."/>
            <person name="Hart E.A."/>
            <person name="Heath P.D."/>
            <person name="Henderson C.D."/>
            <person name="Hopkins B.L."/>
            <person name="Howard P.J."/>
            <person name="Howden P.J."/>
            <person name="Huckle E."/>
            <person name="Johnson C."/>
            <person name="Johnson D."/>
            <person name="Joy A.A."/>
            <person name="Kay M."/>
            <person name="Keenan S."/>
            <person name="Kershaw J.K."/>
            <person name="Kimberley A.M."/>
            <person name="King A."/>
            <person name="Knights A."/>
            <person name="Laird G.K."/>
            <person name="Langford C."/>
            <person name="Lawlor S."/>
            <person name="Leongamornlert D.A."/>
            <person name="Leversha M."/>
            <person name="Lloyd C."/>
            <person name="Lloyd D.M."/>
            <person name="Lovell J."/>
            <person name="Martin S."/>
            <person name="Mashreghi-Mohammadi M."/>
            <person name="Matthews L."/>
            <person name="McLaren S."/>
            <person name="McLay K.E."/>
            <person name="McMurray A."/>
            <person name="Milne S."/>
            <person name="Nickerson T."/>
            <person name="Nisbett J."/>
            <person name="Nordsiek G."/>
            <person name="Pearce A.V."/>
            <person name="Peck A.I."/>
            <person name="Porter K.M."/>
            <person name="Pandian R."/>
            <person name="Pelan S."/>
            <person name="Phillimore B."/>
            <person name="Povey S."/>
            <person name="Ramsey Y."/>
            <person name="Rand V."/>
            <person name="Scharfe M."/>
            <person name="Sehra H.K."/>
            <person name="Shownkeen R."/>
            <person name="Sims S.K."/>
            <person name="Skuce C.D."/>
            <person name="Smith M."/>
            <person name="Steward C.A."/>
            <person name="Swarbreck D."/>
            <person name="Sycamore N."/>
            <person name="Tester J."/>
            <person name="Thorpe A."/>
            <person name="Tracey A."/>
            <person name="Tromans A."/>
            <person name="Thomas D.W."/>
            <person name="Wall M."/>
            <person name="Wallis J.M."/>
            <person name="West A.P."/>
            <person name="Whitehead S.L."/>
            <person name="Willey D.L."/>
            <person name="Williams S.A."/>
            <person name="Wilming L."/>
            <person name="Wray P.W."/>
            <person name="Young L."/>
            <person name="Ashurst J.L."/>
            <person name="Coulson A."/>
            <person name="Blocker H."/>
            <person name="Durbin R.M."/>
            <person name="Sulston J.E."/>
            <person name="Hubbard T."/>
            <person name="Jackson M.J."/>
            <person name="Bentley D.R."/>
            <person name="Beck S."/>
            <person name="Rogers J."/>
            <person name="Dunham I."/>
        </authorList>
    </citation>
    <scope>NUCLEOTIDE SEQUENCE [LARGE SCALE GENOMIC DNA]</scope>
</reference>
<reference key="5">
    <citation type="journal article" date="2004" name="Genome Res.">
        <title>The status, quality, and expansion of the NIH full-length cDNA project: the Mammalian Gene Collection (MGC).</title>
        <authorList>
            <consortium name="The MGC Project Team"/>
        </authorList>
    </citation>
    <scope>NUCLEOTIDE SEQUENCE [LARGE SCALE MRNA]</scope>
    <source>
        <tissue>Pancreas</tissue>
        <tissue>Spleen</tissue>
    </source>
</reference>
<reference key="6">
    <citation type="journal article" date="2006" name="J. Biol. Chem.">
        <title>Human dolichol kinase, a polytopic endoplasmic reticulum membrane protein with a cytoplasmically oriented CTP-binding site.</title>
        <authorList>
            <person name="Shridas P."/>
            <person name="Waechter C.J."/>
        </authorList>
    </citation>
    <scope>SUBCELLULAR LOCATION</scope>
    <scope>TOPOLOGY</scope>
    <scope>FUNCTION</scope>
    <scope>CATALYTIC ACTIVITY</scope>
    <scope>CTP-BINDING</scope>
    <scope>BIOPHYSICOCHEMICAL PROPERTIES</scope>
    <scope>MUTAGENESIS OF GLY-443; ASP-451; LYS-470; LYS-471; THR-472; GLU-474 AND GLY-475</scope>
</reference>
<reference key="7">
    <citation type="journal article" date="2007" name="Am. J. Hum. Genet.">
        <title>A defect in dolichol phosphate biosynthesis causes a new inherited disorder with death in early infancy.</title>
        <authorList>
            <person name="Kranz C."/>
            <person name="Jungeblut C."/>
            <person name="Denecke J."/>
            <person name="Erlekotte A."/>
            <person name="Sohlbach C."/>
            <person name="Debus V."/>
            <person name="Kehl H.G."/>
            <person name="Harms E."/>
            <person name="Reith A."/>
            <person name="Reichel S."/>
            <person name="Groebe H."/>
            <person name="Hammersen G."/>
            <person name="Schwarzer U."/>
            <person name="Marquardt T."/>
        </authorList>
    </citation>
    <scope>VARIANTS CDG1M SER-99 AND SER-441</scope>
    <scope>CHARACTERIZATION OF VARIANTS CDG1M SER-99 AND SER-441</scope>
    <scope>FUNCTION</scope>
    <scope>CATALYTIC ACTIVITY</scope>
</reference>
<reference key="8">
    <citation type="journal article" date="2013" name="Mol. Genet. Metab.">
        <title>Dolichol kinase deficiency (DOLK-CDG) with a purely neurological presentation caused by a novel mutation.</title>
        <authorList>
            <person name="Helander A."/>
            <person name="Stoedberg T."/>
            <person name="Jaeken J."/>
            <person name="Matthijs G."/>
            <person name="Eriksson M."/>
            <person name="Eggertsen G."/>
        </authorList>
    </citation>
    <scope>INVOLVEMENT IN CDG1M</scope>
</reference>
<reference key="9">
    <citation type="journal article" date="2011" name="PLoS Genet.">
        <title>Autosomal recessive dilated cardiomyopathy due to DOLK mutations results from abnormal dystroglycan O-mannosylation.</title>
        <authorList>
            <person name="Lefeber D.J."/>
            <person name="de Brouwer A.P."/>
            <person name="Morava E."/>
            <person name="Riemersma M."/>
            <person name="Schuurs-Hoeijmakers J.H."/>
            <person name="Absmanner B."/>
            <person name="Verrijp K."/>
            <person name="van den Akker W.M."/>
            <person name="Huijben K."/>
            <person name="Steenbergen G."/>
            <person name="van Reeuwijk J."/>
            <person name="Jozwiak A."/>
            <person name="Zucker N."/>
            <person name="Lorber A."/>
            <person name="Lammens M."/>
            <person name="Knopf C."/>
            <person name="van Bokhoven H."/>
            <person name="Gruenewald S."/>
            <person name="Lehle L."/>
            <person name="Kapusta L."/>
            <person name="Mandel H."/>
            <person name="Wevers R.A."/>
        </authorList>
    </citation>
    <scope>VARIANTS CDG1M CYS-304 AND ASP-408</scope>
    <scope>CHARACTERIZATION OF VARIANTS CDG1M SER-99 CYS-304; ASP-408 AND SER-441</scope>
    <scope>FUNCTION</scope>
    <scope>CATALYTIC ACTIVITY</scope>
</reference>
<reference key="10">
    <citation type="journal article" date="2017" name="Am. J. Med. Genet. A">
        <title>Dolichol kinase deficiency (DOLK-CDG): Two new cases and expansion of phenotype.</title>
        <authorList>
            <person name="Rush E.T."/>
            <person name="Baker C.V."/>
            <person name="Rizzo W.B."/>
        </authorList>
    </citation>
    <scope>VARIANTS CDG1M 317-TYR--ALA-538 DEL AND ALA-520</scope>
</reference>
<dbReference type="EC" id="2.7.1.108" evidence="3 4 5"/>
<dbReference type="EMBL" id="AB029017">
    <property type="protein sequence ID" value="BAA83046.2"/>
    <property type="status" value="ALT_INIT"/>
    <property type="molecule type" value="mRNA"/>
</dbReference>
<dbReference type="EMBL" id="AY358759">
    <property type="protein sequence ID" value="AAQ89119.1"/>
    <property type="molecule type" value="mRNA"/>
</dbReference>
<dbReference type="EMBL" id="AL672142">
    <property type="status" value="NOT_ANNOTATED_CDS"/>
    <property type="molecule type" value="Genomic_DNA"/>
</dbReference>
<dbReference type="EMBL" id="BC035556">
    <property type="protein sequence ID" value="AAH35556.1"/>
    <property type="molecule type" value="mRNA"/>
</dbReference>
<dbReference type="CCDS" id="CCDS6915.1"/>
<dbReference type="RefSeq" id="NP_055723.1">
    <property type="nucleotide sequence ID" value="NM_014908.4"/>
</dbReference>
<dbReference type="BioGRID" id="116517">
    <property type="interactions" value="55"/>
</dbReference>
<dbReference type="FunCoup" id="Q9UPQ8">
    <property type="interactions" value="661"/>
</dbReference>
<dbReference type="IntAct" id="Q9UPQ8">
    <property type="interactions" value="49"/>
</dbReference>
<dbReference type="MINT" id="Q9UPQ8"/>
<dbReference type="STRING" id="9606.ENSP00000361667"/>
<dbReference type="iPTMnet" id="Q9UPQ8"/>
<dbReference type="PhosphoSitePlus" id="Q9UPQ8"/>
<dbReference type="SwissPalm" id="Q9UPQ8"/>
<dbReference type="BioMuta" id="DOLK"/>
<dbReference type="DMDM" id="20140913"/>
<dbReference type="jPOST" id="Q9UPQ8"/>
<dbReference type="MassIVE" id="Q9UPQ8"/>
<dbReference type="PaxDb" id="9606-ENSP00000361667"/>
<dbReference type="PeptideAtlas" id="Q9UPQ8"/>
<dbReference type="ProteomicsDB" id="85419"/>
<dbReference type="Pumba" id="Q9UPQ8"/>
<dbReference type="Antibodypedia" id="53680">
    <property type="antibodies" value="70 antibodies from 18 providers"/>
</dbReference>
<dbReference type="DNASU" id="22845"/>
<dbReference type="Ensembl" id="ENST00000372586.4">
    <property type="protein sequence ID" value="ENSP00000361667.3"/>
    <property type="gene ID" value="ENSG00000175283.8"/>
</dbReference>
<dbReference type="GeneID" id="22845"/>
<dbReference type="KEGG" id="hsa:22845"/>
<dbReference type="MANE-Select" id="ENST00000372586.4">
    <property type="protein sequence ID" value="ENSP00000361667.3"/>
    <property type="RefSeq nucleotide sequence ID" value="NM_014908.4"/>
    <property type="RefSeq protein sequence ID" value="NP_055723.1"/>
</dbReference>
<dbReference type="UCSC" id="uc004bwr.4">
    <property type="organism name" value="human"/>
</dbReference>
<dbReference type="AGR" id="HGNC:23406"/>
<dbReference type="CTD" id="22845"/>
<dbReference type="DisGeNET" id="22845"/>
<dbReference type="GeneCards" id="DOLK"/>
<dbReference type="GeneReviews" id="DOLK"/>
<dbReference type="HGNC" id="HGNC:23406">
    <property type="gene designation" value="DOLK"/>
</dbReference>
<dbReference type="HPA" id="ENSG00000175283">
    <property type="expression patterns" value="Low tissue specificity"/>
</dbReference>
<dbReference type="MalaCards" id="DOLK"/>
<dbReference type="MIM" id="610746">
    <property type="type" value="gene"/>
</dbReference>
<dbReference type="MIM" id="610768">
    <property type="type" value="phenotype"/>
</dbReference>
<dbReference type="neXtProt" id="NX_Q9UPQ8"/>
<dbReference type="OpenTargets" id="ENSG00000175283"/>
<dbReference type="Orphanet" id="91131">
    <property type="disease" value="DK1-CDG"/>
</dbReference>
<dbReference type="Orphanet" id="154">
    <property type="disease" value="Familial isolated dilated cardiomyopathy"/>
</dbReference>
<dbReference type="PharmGKB" id="PA162384054"/>
<dbReference type="VEuPathDB" id="HostDB:ENSG00000175283"/>
<dbReference type="eggNOG" id="KOG2468">
    <property type="taxonomic scope" value="Eukaryota"/>
</dbReference>
<dbReference type="GeneTree" id="ENSGT00390000004067"/>
<dbReference type="HOGENOM" id="CLU_027611_2_1_1"/>
<dbReference type="InParanoid" id="Q9UPQ8"/>
<dbReference type="OMA" id="EIHWPGT"/>
<dbReference type="OrthoDB" id="377083at2759"/>
<dbReference type="PAN-GO" id="Q9UPQ8">
    <property type="GO annotations" value="3 GO annotations based on evolutionary models"/>
</dbReference>
<dbReference type="PhylomeDB" id="Q9UPQ8"/>
<dbReference type="TreeFam" id="TF323379"/>
<dbReference type="BRENDA" id="2.7.1.108">
    <property type="organism ID" value="2681"/>
</dbReference>
<dbReference type="PathwayCommons" id="Q9UPQ8"/>
<dbReference type="Reactome" id="R-HSA-446199">
    <property type="pathway name" value="Synthesis of Dolichyl-phosphate"/>
</dbReference>
<dbReference type="Reactome" id="R-HSA-4755583">
    <property type="pathway name" value="Defective DOLK causes DOLK-CDG"/>
</dbReference>
<dbReference type="SignaLink" id="Q9UPQ8"/>
<dbReference type="SIGNOR" id="Q9UPQ8"/>
<dbReference type="UniPathway" id="UPA00378"/>
<dbReference type="BioGRID-ORCS" id="22845">
    <property type="hits" value="409 hits in 1157 CRISPR screens"/>
</dbReference>
<dbReference type="GeneWiki" id="Dolichol_kinase"/>
<dbReference type="GenomeRNAi" id="22845"/>
<dbReference type="Pharos" id="Q9UPQ8">
    <property type="development level" value="Tbio"/>
</dbReference>
<dbReference type="PRO" id="PR:Q9UPQ8"/>
<dbReference type="Proteomes" id="UP000005640">
    <property type="component" value="Chromosome 9"/>
</dbReference>
<dbReference type="RNAct" id="Q9UPQ8">
    <property type="molecule type" value="protein"/>
</dbReference>
<dbReference type="Bgee" id="ENSG00000175283">
    <property type="expression patterns" value="Expressed in primordial germ cell in gonad and 180 other cell types or tissues"/>
</dbReference>
<dbReference type="ExpressionAtlas" id="Q9UPQ8">
    <property type="expression patterns" value="baseline and differential"/>
</dbReference>
<dbReference type="GO" id="GO:0005789">
    <property type="term" value="C:endoplasmic reticulum membrane"/>
    <property type="evidence" value="ECO:0000314"/>
    <property type="project" value="UniProtKB"/>
</dbReference>
<dbReference type="GO" id="GO:0004168">
    <property type="term" value="F:dolichol kinase activity"/>
    <property type="evidence" value="ECO:0000314"/>
    <property type="project" value="UniProtKB"/>
</dbReference>
<dbReference type="GO" id="GO:0019348">
    <property type="term" value="P:dolichol metabolic process"/>
    <property type="evidence" value="ECO:0000316"/>
    <property type="project" value="UniProtKB"/>
</dbReference>
<dbReference type="GO" id="GO:0180047">
    <property type="term" value="P:dolichol phosphate mannose biosynthetic process"/>
    <property type="evidence" value="ECO:0000316"/>
    <property type="project" value="UniProtKB"/>
</dbReference>
<dbReference type="GO" id="GO:0006489">
    <property type="term" value="P:dolichyl diphosphate biosynthetic process"/>
    <property type="evidence" value="ECO:0000304"/>
    <property type="project" value="Reactome"/>
</dbReference>
<dbReference type="GO" id="GO:0043048">
    <property type="term" value="P:dolichyl monophosphate biosynthetic process"/>
    <property type="evidence" value="ECO:0000314"/>
    <property type="project" value="UniProtKB"/>
</dbReference>
<dbReference type="GO" id="GO:0035268">
    <property type="term" value="P:protein mannosylation"/>
    <property type="evidence" value="ECO:0000315"/>
    <property type="project" value="UniProtKB"/>
</dbReference>
<dbReference type="GO" id="GO:0006487">
    <property type="term" value="P:protein N-linked glycosylation"/>
    <property type="evidence" value="ECO:0000316"/>
    <property type="project" value="UniProtKB"/>
</dbReference>
<dbReference type="InterPro" id="IPR032974">
    <property type="entry name" value="Polypren_kinase"/>
</dbReference>
<dbReference type="PANTHER" id="PTHR13205:SF15">
    <property type="entry name" value="DOLICHOL KINASE"/>
    <property type="match status" value="1"/>
</dbReference>
<dbReference type="PANTHER" id="PTHR13205">
    <property type="entry name" value="TRANSMEMBRANE PROTEIN 15-RELATED"/>
    <property type="match status" value="1"/>
</dbReference>
<protein>
    <recommendedName>
        <fullName evidence="11">Dolichol kinase</fullName>
        <ecNumber evidence="3 4 5">2.7.1.108</ecNumber>
    </recommendedName>
    <alternativeName>
        <fullName>Transmembrane protein 15</fullName>
    </alternativeName>
</protein>
<gene>
    <name type="primary">DOLK</name>
    <name evidence="9" type="synonym">KIAA1094</name>
    <name type="synonym">TMEM15</name>
    <name evidence="10" type="ORF">UNQ2422/PRO4980</name>
</gene>
<evidence type="ECO:0000255" key="1"/>
<evidence type="ECO:0000269" key="2">
    <source>
    </source>
</evidence>
<evidence type="ECO:0000269" key="3">
    <source>
    </source>
</evidence>
<evidence type="ECO:0000269" key="4">
    <source>
    </source>
</evidence>
<evidence type="ECO:0000269" key="5">
    <source>
    </source>
</evidence>
<evidence type="ECO:0000269" key="6">
    <source>
    </source>
</evidence>
<evidence type="ECO:0000269" key="7">
    <source>
    </source>
</evidence>
<evidence type="ECO:0000269" key="8">
    <source>
    </source>
</evidence>
<evidence type="ECO:0000303" key="9">
    <source>
    </source>
</evidence>
<evidence type="ECO:0000303" key="10">
    <source>
    </source>
</evidence>
<evidence type="ECO:0000303" key="11">
    <source>
    </source>
</evidence>
<evidence type="ECO:0000305" key="12"/>
<evidence type="ECO:0000305" key="13">
    <source>
    </source>
</evidence>
<evidence type="ECO:0000305" key="14">
    <source>
    </source>
</evidence>
<feature type="chain" id="PRO_0000072595" description="Dolichol kinase">
    <location>
        <begin position="1"/>
        <end position="538"/>
    </location>
</feature>
<feature type="topological domain" description="Lumenal" evidence="4">
    <location>
        <begin position="1"/>
        <end position="13"/>
    </location>
</feature>
<feature type="transmembrane region" description="Helical; Name=1" evidence="1">
    <location>
        <begin position="14"/>
        <end position="34"/>
    </location>
</feature>
<feature type="topological domain" description="Cytoplasmic" evidence="12">
    <location>
        <begin position="35"/>
        <end position="74"/>
    </location>
</feature>
<feature type="transmembrane region" description="Helical; Name=2" evidence="1">
    <location>
        <begin position="75"/>
        <end position="95"/>
    </location>
</feature>
<feature type="topological domain" description="Lumenal" evidence="12">
    <location>
        <begin position="96"/>
        <end position="111"/>
    </location>
</feature>
<feature type="transmembrane region" description="Helical; Name=3" evidence="1">
    <location>
        <begin position="112"/>
        <end position="132"/>
    </location>
</feature>
<feature type="topological domain" description="Cytoplasmic" evidence="12">
    <location>
        <begin position="133"/>
        <end position="134"/>
    </location>
</feature>
<feature type="transmembrane region" description="Helical; Name=4" evidence="1">
    <location>
        <begin position="135"/>
        <end position="155"/>
    </location>
</feature>
<feature type="topological domain" description="Lumenal" evidence="12">
    <location>
        <begin position="156"/>
        <end position="163"/>
    </location>
</feature>
<feature type="transmembrane region" description="Helical; Name=5" evidence="1">
    <location>
        <begin position="164"/>
        <end position="184"/>
    </location>
</feature>
<feature type="topological domain" description="Cytoplasmic" evidence="12">
    <location>
        <begin position="185"/>
        <end position="188"/>
    </location>
</feature>
<feature type="transmembrane region" description="Helical; Name=6" evidence="1">
    <location>
        <begin position="189"/>
        <end position="209"/>
    </location>
</feature>
<feature type="topological domain" description="Lumenal" evidence="12">
    <location>
        <begin position="210"/>
        <end position="224"/>
    </location>
</feature>
<feature type="transmembrane region" description="Helical; Name=7" evidence="1">
    <location>
        <begin position="225"/>
        <end position="245"/>
    </location>
</feature>
<feature type="topological domain" description="Cytoplasmic" evidence="12">
    <location>
        <begin position="246"/>
        <end position="254"/>
    </location>
</feature>
<feature type="transmembrane region" description="Helical; Name=8" evidence="1">
    <location>
        <begin position="255"/>
        <end position="275"/>
    </location>
</feature>
<feature type="topological domain" description="Lumenal" evidence="12">
    <location>
        <begin position="276"/>
        <end position="297"/>
    </location>
</feature>
<feature type="transmembrane region" description="Helical; Name=9" evidence="1">
    <location>
        <begin position="298"/>
        <end position="318"/>
    </location>
</feature>
<feature type="topological domain" description="Cytoplasmic" evidence="12">
    <location>
        <begin position="319"/>
        <end position="337"/>
    </location>
</feature>
<feature type="transmembrane region" description="Helical; Name=10" evidence="1">
    <location>
        <begin position="338"/>
        <end position="354"/>
    </location>
</feature>
<feature type="topological domain" description="Lumenal" evidence="12">
    <location>
        <begin position="355"/>
        <end position="359"/>
    </location>
</feature>
<feature type="transmembrane region" description="Helical; Name=11" evidence="1">
    <location>
        <begin position="360"/>
        <end position="380"/>
    </location>
</feature>
<feature type="topological domain" description="Cytoplasmic" evidence="12">
    <location>
        <begin position="381"/>
        <end position="401"/>
    </location>
</feature>
<feature type="transmembrane region" description="Helical; Name=12" evidence="1">
    <location>
        <begin position="402"/>
        <end position="422"/>
    </location>
</feature>
<feature type="topological domain" description="Lumenal" evidence="12">
    <location>
        <begin position="423"/>
        <end position="436"/>
    </location>
</feature>
<feature type="transmembrane region" description="Helical; Name=13" evidence="1">
    <location>
        <begin position="437"/>
        <end position="457"/>
    </location>
</feature>
<feature type="topological domain" description="Cytoplasmic" evidence="4">
    <location>
        <begin position="458"/>
        <end position="472"/>
    </location>
</feature>
<feature type="transmembrane region" description="Helical; Name=14" evidence="1">
    <location>
        <begin position="473"/>
        <end position="493"/>
    </location>
</feature>
<feature type="topological domain" description="Lumenal" evidence="12">
    <location>
        <begin position="494"/>
        <end position="495"/>
    </location>
</feature>
<feature type="transmembrane region" description="Helical; Name=15" evidence="1">
    <location>
        <begin position="496"/>
        <end position="516"/>
    </location>
</feature>
<feature type="topological domain" description="Cytoplasmic" evidence="4">
    <location>
        <begin position="517"/>
        <end position="538"/>
    </location>
</feature>
<feature type="region of interest" description="CTP-binding" evidence="4">
    <location>
        <begin position="459"/>
        <end position="474"/>
    </location>
</feature>
<feature type="sequence variant" id="VAR_032851" description="In CDG1M; 2% residual dolichol kinase activity; fails to complement the temperature-sensitive phenotype of DK1-deficient yeast cells; dbSNP:rs137853109." evidence="5 6">
    <original>C</original>
    <variation>S</variation>
    <location>
        <position position="99"/>
    </location>
</feature>
<feature type="sequence variant" id="VAR_049709" description="In dbSNP:rs17485436.">
    <original>D</original>
    <variation>V</variation>
    <location>
        <position position="224"/>
    </location>
</feature>
<feature type="sequence variant" id="VAR_089710" description="In CDG1M; decreased dolichol kinase activity; fails to complement the temperature-sensitive phenotype of DK1-deficient yeast cells; dbSNP:rs1564545929." evidence="6">
    <original>W</original>
    <variation>C</variation>
    <location>
        <position position="304"/>
    </location>
</feature>
<feature type="sequence variant" id="VAR_089711" description="In CDG1M." evidence="8">
    <location>
        <begin position="317"/>
        <end position="538"/>
    </location>
</feature>
<feature type="sequence variant" id="VAR_089712" description="In CDG1M; decreased dolichol kinase activity; fails to complement the temperature-sensitive phenotype of DK1-deficient yeast cells; dbSNP:rs387907030." evidence="6">
    <original>H</original>
    <variation>D</variation>
    <location>
        <position position="408"/>
    </location>
</feature>
<feature type="sequence variant" id="VAR_032852" description="In CDG1M; 4% residual dolichol kinase activity; fails to complement the temperature-sensitive phenotype of DK1-deficient yeast cells; dbSNP:rs137853110." evidence="5 6">
    <original>Y</original>
    <variation>S</variation>
    <location>
        <position position="441"/>
    </location>
</feature>
<feature type="sequence variant" id="VAR_089713" description="In CDG1M; uncertain significance; dbSNP:rs374860681." evidence="8">
    <original>T</original>
    <variation>A</variation>
    <location>
        <position position="520"/>
    </location>
</feature>
<feature type="mutagenesis site" description="Abolishes dolichol kinase activity." evidence="4">
    <original>G</original>
    <variation>D</variation>
    <location>
        <position position="443"/>
    </location>
</feature>
<feature type="mutagenesis site" description="Reduces dolichol kinase activity." evidence="4">
    <original>D</original>
    <variation>A</variation>
    <location>
        <position position="451"/>
    </location>
</feature>
<feature type="mutagenesis site" description="Reduces dolichol kinase activity. Significant reduction in binding affinity for CTP; when associated with A-471." evidence="4">
    <original>K</original>
    <variation>A</variation>
    <location>
        <position position="470"/>
    </location>
</feature>
<feature type="mutagenesis site" description="Reduces dolichol kinase activity. Significant reduction in binding affinity for CTP." evidence="4">
    <original>K</original>
    <variation>A</variation>
    <location>
        <position position="471"/>
    </location>
</feature>
<feature type="mutagenesis site" description="Reduces dolichol kinase activity. Significant reduction in binding affinity for CTP." evidence="4">
    <original>T</original>
    <variation>A</variation>
    <location>
        <position position="472"/>
    </location>
</feature>
<feature type="mutagenesis site" description="No effect on dolichol kinase activity." evidence="4">
    <original>E</original>
    <variation>A</variation>
    <location>
        <position position="474"/>
    </location>
</feature>
<feature type="mutagenesis site" description="No effect on dolichol kinase activity." evidence="4">
    <original>G</original>
    <variation>A</variation>
    <location>
        <position position="475"/>
    </location>
</feature>